<gene>
    <name type="primary">mybA</name>
    <name type="ORF">DDB_G0293900</name>
</gene>
<sequence length="1230" mass="135979">MQPKRMSHNLTVGEKAGSPFNVILNAANNTNSDNSSNNSDNENDDNQNNNNNNNNNNNNNNEEEEEEDDDDDDDSQQNRHNISIPFTINKNSINNNNNLINNINNNINNMNNNMNNNNNNNNMNNNINNNGNSNISNNNTPKVEKKKTKGKWTSEEDQILIKAVNLHNQKNWKKIAEHFPDRTDVQCHHRYQKVLHPNLVKGAWTKDEDDKVIELVKTYGPKKWSDIALHLKGRMGKQCRERWHNHLNPNIKKEAWSDEEDQIIRDQHAIHGNKWAEIAKFLPGRTDNAIKNHWNSSMKRVSNNNVHLKSHAIEHSLSSQDNQDSPKSIITSSSPIPTTTTTTTTTSTTLITPPPPPLLPPPPSINKKEKKIKQPKKRNASEIEQTLSQPHINQHESSPIVFENISNGNNKIDIPAAQYLMTNGISCINNNNNNNNNNNNNNNNNNNNNNNNNNNNNNNNNINNNNNINNNNNNNNNINNNNNNNNNNNNNNNNNNHSNVSANTNNNNNTINNNVSLQPPSQLNSNIAQLPSTPKNLAHVNIANKLNSPGELMANIVTPIKFFQTATVSMNSSSKNYNNENTNNNNNNNNNHHHHHHNNNNNNNKRPRLDFSSATPTKNNESFSADLCSQFPDILFSPIQNKNNKESFLDNSGLSPLRSPLHTNFFETPMKNYEYLDFNSPKIPNTISPLKNFNSPFNKINNHSNYNNNNNNNNNNNNNNNNNNNNNNNNNNNNNNNNNNNNHNPNHNSHNHNNHNNNHNHNHNEFAQPQPPQGNYQQSPYKNNSTTASSTLSTPSYSNNSSISSSSCSSSSSNSASKATKVIQLSSSGIDKNSLLTINAKLNNNHHKNYLDSSSSSSSSSSSSSSSSSSSSSSSSSSSSAASSSSTPNNQSDLATVPFTPDDNVFNNNNNNNPPTPGKTKFKSRFSPNSKPYSYPQEYDNYGQSSSTPQNINNTYNSICLGTNNNNNSNSSASNSFENNEENNNENDNNGSSSGGDKVPQMDSSFMALKLLKDNPNKSLFSKARKILGLGNISSSSLSPSSFVQQISNSASASSTPTSSSSTPLSSPTTTTSSVAAAIINKISSTPKYFSNQNQNQNNNNNNNNNNISNNSNLSAFSTPGGNDHVPNFESNSFLAQSPFQDILNSQKLDQLHQLTQTNQLSKSKVLLRNHKNSNQTESNSRSTIESINSNGSNNGNNSGSSNSGSNSDKNNGKPISFRLMESSKPIEGL</sequence>
<evidence type="ECO:0000255" key="1">
    <source>
        <dbReference type="PROSITE-ProRule" id="PRU00625"/>
    </source>
</evidence>
<evidence type="ECO:0000256" key="2">
    <source>
        <dbReference type="SAM" id="MobiDB-lite"/>
    </source>
</evidence>
<evidence type="ECO:0000305" key="3"/>
<name>MYBA_DICDI</name>
<proteinExistence type="predicted"/>
<accession>P34127</accession>
<accession>Q54B39</accession>
<protein>
    <recommendedName>
        <fullName>Myb-like protein A</fullName>
    </recommendedName>
</protein>
<keyword id="KW-0238">DNA-binding</keyword>
<keyword id="KW-0539">Nucleus</keyword>
<keyword id="KW-1185">Reference proteome</keyword>
<keyword id="KW-0677">Repeat</keyword>
<keyword id="KW-0804">Transcription</keyword>
<keyword id="KW-0805">Transcription regulation</keyword>
<reference key="1">
    <citation type="journal article" date="2005" name="Nature">
        <title>The genome of the social amoeba Dictyostelium discoideum.</title>
        <authorList>
            <person name="Eichinger L."/>
            <person name="Pachebat J.A."/>
            <person name="Gloeckner G."/>
            <person name="Rajandream M.A."/>
            <person name="Sucgang R."/>
            <person name="Berriman M."/>
            <person name="Song J."/>
            <person name="Olsen R."/>
            <person name="Szafranski K."/>
            <person name="Xu Q."/>
            <person name="Tunggal B."/>
            <person name="Kummerfeld S."/>
            <person name="Madera M."/>
            <person name="Konfortov B.A."/>
            <person name="Rivero F."/>
            <person name="Bankier A.T."/>
            <person name="Lehmann R."/>
            <person name="Hamlin N."/>
            <person name="Davies R."/>
            <person name="Gaudet P."/>
            <person name="Fey P."/>
            <person name="Pilcher K."/>
            <person name="Chen G."/>
            <person name="Saunders D."/>
            <person name="Sodergren E.J."/>
            <person name="Davis P."/>
            <person name="Kerhornou A."/>
            <person name="Nie X."/>
            <person name="Hall N."/>
            <person name="Anjard C."/>
            <person name="Hemphill L."/>
            <person name="Bason N."/>
            <person name="Farbrother P."/>
            <person name="Desany B."/>
            <person name="Just E."/>
            <person name="Morio T."/>
            <person name="Rost R."/>
            <person name="Churcher C.M."/>
            <person name="Cooper J."/>
            <person name="Haydock S."/>
            <person name="van Driessche N."/>
            <person name="Cronin A."/>
            <person name="Goodhead I."/>
            <person name="Muzny D.M."/>
            <person name="Mourier T."/>
            <person name="Pain A."/>
            <person name="Lu M."/>
            <person name="Harper D."/>
            <person name="Lindsay R."/>
            <person name="Hauser H."/>
            <person name="James K.D."/>
            <person name="Quiles M."/>
            <person name="Madan Babu M."/>
            <person name="Saito T."/>
            <person name="Buchrieser C."/>
            <person name="Wardroper A."/>
            <person name="Felder M."/>
            <person name="Thangavelu M."/>
            <person name="Johnson D."/>
            <person name="Knights A."/>
            <person name="Loulseged H."/>
            <person name="Mungall K.L."/>
            <person name="Oliver K."/>
            <person name="Price C."/>
            <person name="Quail M.A."/>
            <person name="Urushihara H."/>
            <person name="Hernandez J."/>
            <person name="Rabbinowitsch E."/>
            <person name="Steffen D."/>
            <person name="Sanders M."/>
            <person name="Ma J."/>
            <person name="Kohara Y."/>
            <person name="Sharp S."/>
            <person name="Simmonds M.N."/>
            <person name="Spiegler S."/>
            <person name="Tivey A."/>
            <person name="Sugano S."/>
            <person name="White B."/>
            <person name="Walker D."/>
            <person name="Woodward J.R."/>
            <person name="Winckler T."/>
            <person name="Tanaka Y."/>
            <person name="Shaulsky G."/>
            <person name="Schleicher M."/>
            <person name="Weinstock G.M."/>
            <person name="Rosenthal A."/>
            <person name="Cox E.C."/>
            <person name="Chisholm R.L."/>
            <person name="Gibbs R.A."/>
            <person name="Loomis W.F."/>
            <person name="Platzer M."/>
            <person name="Kay R.R."/>
            <person name="Williams J.G."/>
            <person name="Dear P.H."/>
            <person name="Noegel A.A."/>
            <person name="Barrell B.G."/>
            <person name="Kuspa A."/>
        </authorList>
    </citation>
    <scope>NUCLEOTIDE SEQUENCE [LARGE SCALE GENOMIC DNA]</scope>
    <source>
        <strain>AX4</strain>
    </source>
</reference>
<reference key="2">
    <citation type="journal article" date="1992" name="Oncogene">
        <title>The Myb DNA-binding domain is highly conserved in Dictyostelium discoideum.</title>
        <authorList>
            <person name="Stober-Graesser U."/>
            <person name="Brydolf B."/>
            <person name="Bin X."/>
            <person name="Graesser F."/>
            <person name="Firtel R.A."/>
            <person name="Lipsick J.S."/>
        </authorList>
    </citation>
    <scope>NUCLEOTIDE SEQUENCE [GENOMIC DNA] OF 1-451</scope>
</reference>
<feature type="chain" id="PRO_0000197062" description="Myb-like protein A">
    <location>
        <begin position="1"/>
        <end position="1230"/>
    </location>
</feature>
<feature type="domain" description="HTH myb-type 1" evidence="1">
    <location>
        <begin position="144"/>
        <end position="195"/>
    </location>
</feature>
<feature type="domain" description="HTH myb-type 2" evidence="1">
    <location>
        <begin position="196"/>
        <end position="251"/>
    </location>
</feature>
<feature type="domain" description="HTH myb-type 3" evidence="1">
    <location>
        <begin position="252"/>
        <end position="302"/>
    </location>
</feature>
<feature type="DNA-binding region" description="H-T-H motif" evidence="1">
    <location>
        <begin position="172"/>
        <end position="195"/>
    </location>
</feature>
<feature type="DNA-binding region" description="H-T-H motif" evidence="1">
    <location>
        <begin position="224"/>
        <end position="247"/>
    </location>
</feature>
<feature type="DNA-binding region" description="H-T-H motif" evidence="1">
    <location>
        <begin position="275"/>
        <end position="298"/>
    </location>
</feature>
<feature type="region of interest" description="Disordered" evidence="2">
    <location>
        <begin position="22"/>
        <end position="79"/>
    </location>
</feature>
<feature type="region of interest" description="Disordered" evidence="2">
    <location>
        <begin position="115"/>
        <end position="151"/>
    </location>
</feature>
<feature type="region of interest" description="Disordered" evidence="2">
    <location>
        <begin position="315"/>
        <end position="397"/>
    </location>
</feature>
<feature type="region of interest" description="Disordered" evidence="2">
    <location>
        <begin position="432"/>
        <end position="529"/>
    </location>
</feature>
<feature type="region of interest" description="Disordered" evidence="2">
    <location>
        <begin position="573"/>
        <end position="624"/>
    </location>
</feature>
<feature type="region of interest" description="Disordered" evidence="2">
    <location>
        <begin position="694"/>
        <end position="814"/>
    </location>
</feature>
<feature type="region of interest" description="Disordered" evidence="2">
    <location>
        <begin position="849"/>
        <end position="954"/>
    </location>
</feature>
<feature type="region of interest" description="Disordered" evidence="2">
    <location>
        <begin position="967"/>
        <end position="1001"/>
    </location>
</feature>
<feature type="region of interest" description="Disordered" evidence="2">
    <location>
        <begin position="1051"/>
        <end position="1070"/>
    </location>
</feature>
<feature type="region of interest" description="Disordered" evidence="2">
    <location>
        <begin position="1088"/>
        <end position="1131"/>
    </location>
</feature>
<feature type="region of interest" description="Disordered" evidence="2">
    <location>
        <begin position="1163"/>
        <end position="1230"/>
    </location>
</feature>
<feature type="compositionally biased region" description="Low complexity" evidence="2">
    <location>
        <begin position="28"/>
        <end position="60"/>
    </location>
</feature>
<feature type="compositionally biased region" description="Acidic residues" evidence="2">
    <location>
        <begin position="61"/>
        <end position="75"/>
    </location>
</feature>
<feature type="compositionally biased region" description="Low complexity" evidence="2">
    <location>
        <begin position="115"/>
        <end position="141"/>
    </location>
</feature>
<feature type="compositionally biased region" description="Polar residues" evidence="2">
    <location>
        <begin position="316"/>
        <end position="326"/>
    </location>
</feature>
<feature type="compositionally biased region" description="Low complexity" evidence="2">
    <location>
        <begin position="328"/>
        <end position="351"/>
    </location>
</feature>
<feature type="compositionally biased region" description="Pro residues" evidence="2">
    <location>
        <begin position="352"/>
        <end position="364"/>
    </location>
</feature>
<feature type="compositionally biased region" description="Basic residues" evidence="2">
    <location>
        <begin position="368"/>
        <end position="378"/>
    </location>
</feature>
<feature type="compositionally biased region" description="Polar residues" evidence="2">
    <location>
        <begin position="382"/>
        <end position="397"/>
    </location>
</feature>
<feature type="compositionally biased region" description="Low complexity" evidence="2">
    <location>
        <begin position="432"/>
        <end position="514"/>
    </location>
</feature>
<feature type="compositionally biased region" description="Polar residues" evidence="2">
    <location>
        <begin position="515"/>
        <end position="529"/>
    </location>
</feature>
<feature type="compositionally biased region" description="Low complexity" evidence="2">
    <location>
        <begin position="576"/>
        <end position="590"/>
    </location>
</feature>
<feature type="compositionally biased region" description="Polar residues" evidence="2">
    <location>
        <begin position="612"/>
        <end position="623"/>
    </location>
</feature>
<feature type="compositionally biased region" description="Low complexity" evidence="2">
    <location>
        <begin position="701"/>
        <end position="748"/>
    </location>
</feature>
<feature type="compositionally biased region" description="Basic residues" evidence="2">
    <location>
        <begin position="749"/>
        <end position="761"/>
    </location>
</feature>
<feature type="compositionally biased region" description="Polar residues" evidence="2">
    <location>
        <begin position="773"/>
        <end position="782"/>
    </location>
</feature>
<feature type="compositionally biased region" description="Low complexity" evidence="2">
    <location>
        <begin position="783"/>
        <end position="814"/>
    </location>
</feature>
<feature type="compositionally biased region" description="Low complexity" evidence="2">
    <location>
        <begin position="853"/>
        <end position="886"/>
    </location>
</feature>
<feature type="compositionally biased region" description="Low complexity" evidence="2">
    <location>
        <begin position="898"/>
        <end position="913"/>
    </location>
</feature>
<feature type="compositionally biased region" description="Polar residues" evidence="2">
    <location>
        <begin position="942"/>
        <end position="954"/>
    </location>
</feature>
<feature type="compositionally biased region" description="Low complexity" evidence="2">
    <location>
        <begin position="967"/>
        <end position="978"/>
    </location>
</feature>
<feature type="compositionally biased region" description="Low complexity" evidence="2">
    <location>
        <begin position="1091"/>
        <end position="1113"/>
    </location>
</feature>
<feature type="compositionally biased region" description="Polar residues" evidence="2">
    <location>
        <begin position="1173"/>
        <end position="1188"/>
    </location>
</feature>
<feature type="compositionally biased region" description="Low complexity" evidence="2">
    <location>
        <begin position="1189"/>
        <end position="1208"/>
    </location>
</feature>
<feature type="sequence conflict" description="In Ref. 2; CAB37862." evidence="3" ref="2">
    <original>I</original>
    <variation>F</variation>
    <location>
        <position position="372"/>
    </location>
</feature>
<organism>
    <name type="scientific">Dictyostelium discoideum</name>
    <name type="common">Social amoeba</name>
    <dbReference type="NCBI Taxonomy" id="44689"/>
    <lineage>
        <taxon>Eukaryota</taxon>
        <taxon>Amoebozoa</taxon>
        <taxon>Evosea</taxon>
        <taxon>Eumycetozoa</taxon>
        <taxon>Dictyostelia</taxon>
        <taxon>Dictyosteliales</taxon>
        <taxon>Dictyosteliaceae</taxon>
        <taxon>Dictyostelium</taxon>
    </lineage>
</organism>
<dbReference type="EMBL" id="AAFI02000224">
    <property type="protein sequence ID" value="EAL60449.1"/>
    <property type="molecule type" value="Genomic_DNA"/>
</dbReference>
<dbReference type="EMBL" id="Z11534">
    <property type="protein sequence ID" value="CAB37862.1"/>
    <property type="molecule type" value="Genomic_DNA"/>
</dbReference>
<dbReference type="RefSeq" id="XP_628877.1">
    <property type="nucleotide sequence ID" value="XM_628875.1"/>
</dbReference>
<dbReference type="SMR" id="P34127"/>
<dbReference type="FunCoup" id="P34127">
    <property type="interactions" value="262"/>
</dbReference>
<dbReference type="STRING" id="44689.P34127"/>
<dbReference type="GlyGen" id="P34127">
    <property type="glycosylation" value="2 sites"/>
</dbReference>
<dbReference type="PaxDb" id="44689-DDB0219992"/>
<dbReference type="EnsemblProtists" id="EAL60449">
    <property type="protein sequence ID" value="EAL60449"/>
    <property type="gene ID" value="DDB_G0293900"/>
</dbReference>
<dbReference type="GeneID" id="8629493"/>
<dbReference type="KEGG" id="ddi:DDB_G0293900"/>
<dbReference type="dictyBase" id="DDB_G0293900">
    <property type="gene designation" value="mybA"/>
</dbReference>
<dbReference type="VEuPathDB" id="AmoebaDB:DDB_G0293900"/>
<dbReference type="eggNOG" id="KOG0048">
    <property type="taxonomic scope" value="Eukaryota"/>
</dbReference>
<dbReference type="HOGENOM" id="CLU_267811_0_0_1"/>
<dbReference type="InParanoid" id="P34127"/>
<dbReference type="PRO" id="PR:P34127"/>
<dbReference type="Proteomes" id="UP000002195">
    <property type="component" value="Chromosome 6"/>
</dbReference>
<dbReference type="GO" id="GO:0005634">
    <property type="term" value="C:nucleus"/>
    <property type="evidence" value="ECO:0000318"/>
    <property type="project" value="GO_Central"/>
</dbReference>
<dbReference type="GO" id="GO:0003677">
    <property type="term" value="F:DNA binding"/>
    <property type="evidence" value="ECO:0000314"/>
    <property type="project" value="dictyBase"/>
</dbReference>
<dbReference type="GO" id="GO:0000981">
    <property type="term" value="F:DNA-binding transcription factor activity, RNA polymerase II-specific"/>
    <property type="evidence" value="ECO:0000318"/>
    <property type="project" value="GO_Central"/>
</dbReference>
<dbReference type="GO" id="GO:0000978">
    <property type="term" value="F:RNA polymerase II cis-regulatory region sequence-specific DNA binding"/>
    <property type="evidence" value="ECO:0000318"/>
    <property type="project" value="GO_Central"/>
</dbReference>
<dbReference type="GO" id="GO:0000278">
    <property type="term" value="P:mitotic cell cycle"/>
    <property type="evidence" value="ECO:0000318"/>
    <property type="project" value="GO_Central"/>
</dbReference>
<dbReference type="GO" id="GO:0000122">
    <property type="term" value="P:negative regulation of transcription by RNA polymerase II"/>
    <property type="evidence" value="ECO:0000315"/>
    <property type="project" value="dictyBase"/>
</dbReference>
<dbReference type="GO" id="GO:0045944">
    <property type="term" value="P:positive regulation of transcription by RNA polymerase II"/>
    <property type="evidence" value="ECO:0000318"/>
    <property type="project" value="GO_Central"/>
</dbReference>
<dbReference type="CDD" id="cd00167">
    <property type="entry name" value="SANT"/>
    <property type="match status" value="3"/>
</dbReference>
<dbReference type="FunFam" id="1.10.10.60:FF:001068">
    <property type="match status" value="1"/>
</dbReference>
<dbReference type="FunFam" id="1.10.10.60:FF:000010">
    <property type="entry name" value="Transcriptional activator Myb isoform A"/>
    <property type="match status" value="1"/>
</dbReference>
<dbReference type="FunFam" id="1.10.10.60:FF:000016">
    <property type="entry name" value="Transcriptional activator Myb isoform A"/>
    <property type="match status" value="1"/>
</dbReference>
<dbReference type="Gene3D" id="1.10.10.60">
    <property type="entry name" value="Homeodomain-like"/>
    <property type="match status" value="3"/>
</dbReference>
<dbReference type="InterPro" id="IPR009057">
    <property type="entry name" value="Homeodomain-like_sf"/>
</dbReference>
<dbReference type="InterPro" id="IPR051575">
    <property type="entry name" value="Myb-like_DNA-bd"/>
</dbReference>
<dbReference type="InterPro" id="IPR017930">
    <property type="entry name" value="Myb_dom"/>
</dbReference>
<dbReference type="InterPro" id="IPR001005">
    <property type="entry name" value="SANT/Myb"/>
</dbReference>
<dbReference type="InterPro" id="IPR017884">
    <property type="entry name" value="SANT_dom"/>
</dbReference>
<dbReference type="PANTHER" id="PTHR46621">
    <property type="entry name" value="SNRNA-ACTIVATING PROTEIN COMPLEX SUBUNIT 4"/>
    <property type="match status" value="1"/>
</dbReference>
<dbReference type="PANTHER" id="PTHR46621:SF1">
    <property type="entry name" value="SNRNA-ACTIVATING PROTEIN COMPLEX SUBUNIT 4"/>
    <property type="match status" value="1"/>
</dbReference>
<dbReference type="Pfam" id="PF13921">
    <property type="entry name" value="Myb_DNA-bind_6"/>
    <property type="match status" value="1"/>
</dbReference>
<dbReference type="Pfam" id="PF00249">
    <property type="entry name" value="Myb_DNA-binding"/>
    <property type="match status" value="1"/>
</dbReference>
<dbReference type="SMART" id="SM00717">
    <property type="entry name" value="SANT"/>
    <property type="match status" value="3"/>
</dbReference>
<dbReference type="SUPFAM" id="SSF46689">
    <property type="entry name" value="Homeodomain-like"/>
    <property type="match status" value="2"/>
</dbReference>
<dbReference type="PROSITE" id="PS51294">
    <property type="entry name" value="HTH_MYB"/>
    <property type="match status" value="3"/>
</dbReference>
<comment type="function">
    <text>May control cellular differentiation.</text>
</comment>
<comment type="subcellular location">
    <subcellularLocation>
        <location evidence="3">Nucleus</location>
    </subcellularLocation>
</comment>
<comment type="caution">
    <text evidence="3">It is uncertain whether Met-1, Met-6, Met-110, Met-114 or Met-123 is the initiator.</text>
</comment>